<sequence>MAKVESFTLDHTKVKAPYVRLITVEEGPKGDKISNYDLRLVQPNENAIPTAGLHTIEHLLAGLLRDRLGGVIDCSPFGCRTGFHLITWGEHSTTEVAKALKSSLEEIAYKTKWEDVQGTTIESCGNYRDHSLFSAKEWSKKILDEGISDKPFERHVVD</sequence>
<feature type="chain" id="PRO_1000093315" description="S-ribosylhomocysteine lyase">
    <location>
        <begin position="1"/>
        <end position="158"/>
    </location>
</feature>
<feature type="binding site" evidence="1">
    <location>
        <position position="54"/>
    </location>
    <ligand>
        <name>Fe cation</name>
        <dbReference type="ChEBI" id="CHEBI:24875"/>
    </ligand>
</feature>
<feature type="binding site" evidence="1">
    <location>
        <position position="58"/>
    </location>
    <ligand>
        <name>Fe cation</name>
        <dbReference type="ChEBI" id="CHEBI:24875"/>
    </ligand>
</feature>
<feature type="binding site" evidence="1">
    <location>
        <position position="124"/>
    </location>
    <ligand>
        <name>Fe cation</name>
        <dbReference type="ChEBI" id="CHEBI:24875"/>
    </ligand>
</feature>
<accession>B2G970</accession>
<proteinExistence type="inferred from homology"/>
<protein>
    <recommendedName>
        <fullName evidence="1">S-ribosylhomocysteine lyase</fullName>
        <ecNumber evidence="1">4.4.1.21</ecNumber>
    </recommendedName>
    <alternativeName>
        <fullName evidence="1">AI-2 synthesis protein</fullName>
    </alternativeName>
    <alternativeName>
        <fullName evidence="1">Autoinducer-2 production protein LuxS</fullName>
    </alternativeName>
</protein>
<keyword id="KW-0071">Autoinducer synthesis</keyword>
<keyword id="KW-0408">Iron</keyword>
<keyword id="KW-0456">Lyase</keyword>
<keyword id="KW-0479">Metal-binding</keyword>
<keyword id="KW-0673">Quorum sensing</keyword>
<gene>
    <name evidence="1" type="primary">luxS</name>
    <name type="ordered locus">LAR_1486</name>
</gene>
<comment type="function">
    <text evidence="1">Involved in the synthesis of autoinducer 2 (AI-2) which is secreted by bacteria and is used to communicate both the cell density and the metabolic potential of the environment. The regulation of gene expression in response to changes in cell density is called quorum sensing. Catalyzes the transformation of S-ribosylhomocysteine (RHC) to homocysteine (HC) and 4,5-dihydroxy-2,3-pentadione (DPD).</text>
</comment>
<comment type="catalytic activity">
    <reaction evidence="1">
        <text>S-(5-deoxy-D-ribos-5-yl)-L-homocysteine = (S)-4,5-dihydroxypentane-2,3-dione + L-homocysteine</text>
        <dbReference type="Rhea" id="RHEA:17753"/>
        <dbReference type="ChEBI" id="CHEBI:29484"/>
        <dbReference type="ChEBI" id="CHEBI:58195"/>
        <dbReference type="ChEBI" id="CHEBI:58199"/>
        <dbReference type="EC" id="4.4.1.21"/>
    </reaction>
</comment>
<comment type="cofactor">
    <cofactor evidence="1">
        <name>Fe cation</name>
        <dbReference type="ChEBI" id="CHEBI:24875"/>
    </cofactor>
    <text evidence="1">Binds 1 Fe cation per subunit.</text>
</comment>
<comment type="subunit">
    <text evidence="1">Homodimer.</text>
</comment>
<comment type="similarity">
    <text evidence="1">Belongs to the LuxS family.</text>
</comment>
<organism>
    <name type="scientific">Limosilactobacillus reuteri subsp. reuteri (strain JCM 1112)</name>
    <name type="common">Lactobacillus reuteri</name>
    <dbReference type="NCBI Taxonomy" id="557433"/>
    <lineage>
        <taxon>Bacteria</taxon>
        <taxon>Bacillati</taxon>
        <taxon>Bacillota</taxon>
        <taxon>Bacilli</taxon>
        <taxon>Lactobacillales</taxon>
        <taxon>Lactobacillaceae</taxon>
        <taxon>Limosilactobacillus</taxon>
    </lineage>
</organism>
<name>LUXS_LIMRJ</name>
<reference key="1">
    <citation type="journal article" date="2008" name="DNA Res.">
        <title>Comparative genome analysis of Lactobacillus reuteri and Lactobacillus fermentum reveal a genomic island for reuterin and cobalamin production.</title>
        <authorList>
            <person name="Morita H."/>
            <person name="Toh H."/>
            <person name="Fukuda S."/>
            <person name="Horikawa H."/>
            <person name="Oshima K."/>
            <person name="Suzuki T."/>
            <person name="Murakami M."/>
            <person name="Hisamatsu S."/>
            <person name="Kato Y."/>
            <person name="Takizawa T."/>
            <person name="Fukuoka H."/>
            <person name="Yoshimura T."/>
            <person name="Itoh K."/>
            <person name="O'Sullivan D.J."/>
            <person name="McKay L.L."/>
            <person name="Ohno H."/>
            <person name="Kikuchi J."/>
            <person name="Masaoka T."/>
            <person name="Hattori M."/>
        </authorList>
    </citation>
    <scope>NUCLEOTIDE SEQUENCE [LARGE SCALE GENOMIC DNA]</scope>
    <source>
        <strain>JCM 1112</strain>
    </source>
</reference>
<evidence type="ECO:0000255" key="1">
    <source>
        <dbReference type="HAMAP-Rule" id="MF_00091"/>
    </source>
</evidence>
<dbReference type="EC" id="4.4.1.21" evidence="1"/>
<dbReference type="EMBL" id="AP007281">
    <property type="protein sequence ID" value="BAG26002.1"/>
    <property type="molecule type" value="Genomic_DNA"/>
</dbReference>
<dbReference type="RefSeq" id="WP_003668959.1">
    <property type="nucleotide sequence ID" value="NC_010609.1"/>
</dbReference>
<dbReference type="SMR" id="B2G970"/>
<dbReference type="KEGG" id="lrf:LAR_1486"/>
<dbReference type="HOGENOM" id="CLU_107531_2_1_9"/>
<dbReference type="GO" id="GO:0005506">
    <property type="term" value="F:iron ion binding"/>
    <property type="evidence" value="ECO:0007669"/>
    <property type="project" value="InterPro"/>
</dbReference>
<dbReference type="GO" id="GO:0043768">
    <property type="term" value="F:S-ribosylhomocysteine lyase activity"/>
    <property type="evidence" value="ECO:0007669"/>
    <property type="project" value="UniProtKB-UniRule"/>
</dbReference>
<dbReference type="GO" id="GO:0009372">
    <property type="term" value="P:quorum sensing"/>
    <property type="evidence" value="ECO:0007669"/>
    <property type="project" value="UniProtKB-UniRule"/>
</dbReference>
<dbReference type="Gene3D" id="3.30.1360.80">
    <property type="entry name" value="S-ribosylhomocysteinase (LuxS)"/>
    <property type="match status" value="1"/>
</dbReference>
<dbReference type="HAMAP" id="MF_00091">
    <property type="entry name" value="LuxS"/>
    <property type="match status" value="1"/>
</dbReference>
<dbReference type="InterPro" id="IPR037005">
    <property type="entry name" value="LuxS_sf"/>
</dbReference>
<dbReference type="InterPro" id="IPR011249">
    <property type="entry name" value="Metalloenz_LuxS/M16"/>
</dbReference>
<dbReference type="InterPro" id="IPR003815">
    <property type="entry name" value="S-ribosylhomocysteinase"/>
</dbReference>
<dbReference type="NCBIfam" id="NF002606">
    <property type="entry name" value="PRK02260.2-4"/>
    <property type="match status" value="1"/>
</dbReference>
<dbReference type="NCBIfam" id="NF002608">
    <property type="entry name" value="PRK02260.3-1"/>
    <property type="match status" value="1"/>
</dbReference>
<dbReference type="PANTHER" id="PTHR35799">
    <property type="entry name" value="S-RIBOSYLHOMOCYSTEINE LYASE"/>
    <property type="match status" value="1"/>
</dbReference>
<dbReference type="PANTHER" id="PTHR35799:SF1">
    <property type="entry name" value="S-RIBOSYLHOMOCYSTEINE LYASE"/>
    <property type="match status" value="1"/>
</dbReference>
<dbReference type="Pfam" id="PF02664">
    <property type="entry name" value="LuxS"/>
    <property type="match status" value="1"/>
</dbReference>
<dbReference type="PIRSF" id="PIRSF006160">
    <property type="entry name" value="AI2"/>
    <property type="match status" value="1"/>
</dbReference>
<dbReference type="PRINTS" id="PR01487">
    <property type="entry name" value="LUXSPROTEIN"/>
</dbReference>
<dbReference type="SUPFAM" id="SSF63411">
    <property type="entry name" value="LuxS/MPP-like metallohydrolase"/>
    <property type="match status" value="1"/>
</dbReference>